<organism>
    <name type="scientific">Bordetella avium (strain 197N)</name>
    <dbReference type="NCBI Taxonomy" id="360910"/>
    <lineage>
        <taxon>Bacteria</taxon>
        <taxon>Pseudomonadati</taxon>
        <taxon>Pseudomonadota</taxon>
        <taxon>Betaproteobacteria</taxon>
        <taxon>Burkholderiales</taxon>
        <taxon>Alcaligenaceae</taxon>
        <taxon>Bordetella</taxon>
    </lineage>
</organism>
<reference key="1">
    <citation type="journal article" date="2006" name="J. Bacteriol.">
        <title>Comparison of the genome sequence of the poultry pathogen Bordetella avium with those of B. bronchiseptica, B. pertussis, and B. parapertussis reveals extensive diversity in surface structures associated with host interaction.</title>
        <authorList>
            <person name="Sebaihia M."/>
            <person name="Preston A."/>
            <person name="Maskell D.J."/>
            <person name="Kuzmiak H."/>
            <person name="Connell T.D."/>
            <person name="King N.D."/>
            <person name="Orndorff P.E."/>
            <person name="Miyamoto D.M."/>
            <person name="Thomson N.R."/>
            <person name="Harris D."/>
            <person name="Goble A."/>
            <person name="Lord A."/>
            <person name="Murphy L."/>
            <person name="Quail M.A."/>
            <person name="Rutter S."/>
            <person name="Squares R."/>
            <person name="Squares S."/>
            <person name="Woodward J."/>
            <person name="Parkhill J."/>
            <person name="Temple L.M."/>
        </authorList>
    </citation>
    <scope>NUCLEOTIDE SEQUENCE [LARGE SCALE GENOMIC DNA]</scope>
    <source>
        <strain>197N</strain>
    </source>
</reference>
<protein>
    <recommendedName>
        <fullName evidence="1">3-isopropylmalate dehydratase small subunit</fullName>
        <ecNumber evidence="1">4.2.1.33</ecNumber>
    </recommendedName>
    <alternativeName>
        <fullName evidence="1">Alpha-IPM isomerase</fullName>
        <shortName evidence="1">IPMI</shortName>
    </alternativeName>
    <alternativeName>
        <fullName evidence="1">Isopropylmalate isomerase</fullName>
    </alternativeName>
</protein>
<dbReference type="EC" id="4.2.1.33" evidence="1"/>
<dbReference type="EMBL" id="AM167904">
    <property type="protein sequence ID" value="CAJ49879.1"/>
    <property type="molecule type" value="Genomic_DNA"/>
</dbReference>
<dbReference type="RefSeq" id="WP_012417930.1">
    <property type="nucleotide sequence ID" value="NC_010645.1"/>
</dbReference>
<dbReference type="SMR" id="Q2KYL4"/>
<dbReference type="STRING" id="360910.BAV2269"/>
<dbReference type="KEGG" id="bav:BAV2269"/>
<dbReference type="eggNOG" id="COG0066">
    <property type="taxonomic scope" value="Bacteria"/>
</dbReference>
<dbReference type="HOGENOM" id="CLU_081378_0_3_4"/>
<dbReference type="OrthoDB" id="9777465at2"/>
<dbReference type="UniPathway" id="UPA00048">
    <property type="reaction ID" value="UER00071"/>
</dbReference>
<dbReference type="Proteomes" id="UP000001977">
    <property type="component" value="Chromosome"/>
</dbReference>
<dbReference type="GO" id="GO:0009316">
    <property type="term" value="C:3-isopropylmalate dehydratase complex"/>
    <property type="evidence" value="ECO:0007669"/>
    <property type="project" value="InterPro"/>
</dbReference>
<dbReference type="GO" id="GO:0003861">
    <property type="term" value="F:3-isopropylmalate dehydratase activity"/>
    <property type="evidence" value="ECO:0007669"/>
    <property type="project" value="UniProtKB-UniRule"/>
</dbReference>
<dbReference type="GO" id="GO:0009098">
    <property type="term" value="P:L-leucine biosynthetic process"/>
    <property type="evidence" value="ECO:0007669"/>
    <property type="project" value="UniProtKB-UniRule"/>
</dbReference>
<dbReference type="CDD" id="cd01577">
    <property type="entry name" value="IPMI_Swivel"/>
    <property type="match status" value="1"/>
</dbReference>
<dbReference type="FunFam" id="3.20.19.10:FF:000003">
    <property type="entry name" value="3-isopropylmalate dehydratase small subunit"/>
    <property type="match status" value="1"/>
</dbReference>
<dbReference type="Gene3D" id="3.20.19.10">
    <property type="entry name" value="Aconitase, domain 4"/>
    <property type="match status" value="1"/>
</dbReference>
<dbReference type="HAMAP" id="MF_01031">
    <property type="entry name" value="LeuD_type1"/>
    <property type="match status" value="1"/>
</dbReference>
<dbReference type="InterPro" id="IPR004431">
    <property type="entry name" value="3-IsopropMal_deHydase_ssu"/>
</dbReference>
<dbReference type="InterPro" id="IPR015928">
    <property type="entry name" value="Aconitase/3IPM_dehydase_swvl"/>
</dbReference>
<dbReference type="InterPro" id="IPR000573">
    <property type="entry name" value="AconitaseA/IPMdHydase_ssu_swvl"/>
</dbReference>
<dbReference type="InterPro" id="IPR033940">
    <property type="entry name" value="IPMI_Swivel"/>
</dbReference>
<dbReference type="InterPro" id="IPR050075">
    <property type="entry name" value="LeuD"/>
</dbReference>
<dbReference type="NCBIfam" id="TIGR00171">
    <property type="entry name" value="leuD"/>
    <property type="match status" value="1"/>
</dbReference>
<dbReference type="NCBIfam" id="NF002458">
    <property type="entry name" value="PRK01641.1"/>
    <property type="match status" value="1"/>
</dbReference>
<dbReference type="PANTHER" id="PTHR43345:SF5">
    <property type="entry name" value="3-ISOPROPYLMALATE DEHYDRATASE SMALL SUBUNIT"/>
    <property type="match status" value="1"/>
</dbReference>
<dbReference type="PANTHER" id="PTHR43345">
    <property type="entry name" value="3-ISOPROPYLMALATE DEHYDRATASE SMALL SUBUNIT 2-RELATED-RELATED"/>
    <property type="match status" value="1"/>
</dbReference>
<dbReference type="Pfam" id="PF00694">
    <property type="entry name" value="Aconitase_C"/>
    <property type="match status" value="1"/>
</dbReference>
<dbReference type="SUPFAM" id="SSF52016">
    <property type="entry name" value="LeuD/IlvD-like"/>
    <property type="match status" value="1"/>
</dbReference>
<evidence type="ECO:0000255" key="1">
    <source>
        <dbReference type="HAMAP-Rule" id="MF_01031"/>
    </source>
</evidence>
<name>LEUD_BORA1</name>
<accession>Q2KYL4</accession>
<gene>
    <name evidence="1" type="primary">leuD</name>
    <name type="ordered locus">BAV2269</name>
</gene>
<sequence length="216" mass="24636">MQAFTFHEGLVAPLDRENVDTDLIIPKQFLKSIKRTGFGPNLFDELRYLDHGEPGMDNSKRPLNPDFVLNQPRYQGASILLGRKNFGCGSSREHAPWALQQYGFRAIIAPSYADIFFNNSFKNGLLPIVLTELEVARLFDEVKAFPGYKLKVDLERQVVIAADGREMAFEVDAFRKYCLLNGFDDIGLTLRQSDKIRAFEAERLARHPWLESRPVA</sequence>
<proteinExistence type="inferred from homology"/>
<comment type="function">
    <text evidence="1">Catalyzes the isomerization between 2-isopropylmalate and 3-isopropylmalate, via the formation of 2-isopropylmaleate.</text>
</comment>
<comment type="catalytic activity">
    <reaction evidence="1">
        <text>(2R,3S)-3-isopropylmalate = (2S)-2-isopropylmalate</text>
        <dbReference type="Rhea" id="RHEA:32287"/>
        <dbReference type="ChEBI" id="CHEBI:1178"/>
        <dbReference type="ChEBI" id="CHEBI:35121"/>
        <dbReference type="EC" id="4.2.1.33"/>
    </reaction>
</comment>
<comment type="pathway">
    <text evidence="1">Amino-acid biosynthesis; L-leucine biosynthesis; L-leucine from 3-methyl-2-oxobutanoate: step 2/4.</text>
</comment>
<comment type="subunit">
    <text evidence="1">Heterodimer of LeuC and LeuD.</text>
</comment>
<comment type="similarity">
    <text evidence="1">Belongs to the LeuD family. LeuD type 1 subfamily.</text>
</comment>
<keyword id="KW-0028">Amino-acid biosynthesis</keyword>
<keyword id="KW-0100">Branched-chain amino acid biosynthesis</keyword>
<keyword id="KW-0432">Leucine biosynthesis</keyword>
<keyword id="KW-0456">Lyase</keyword>
<keyword id="KW-1185">Reference proteome</keyword>
<feature type="chain" id="PRO_1000063736" description="3-isopropylmalate dehydratase small subunit">
    <location>
        <begin position="1"/>
        <end position="216"/>
    </location>
</feature>